<proteinExistence type="inferred from homology"/>
<reference key="1">
    <citation type="journal article" date="2005" name="Infect. Immun.">
        <title>Whole-genome analyses of speciation events in pathogenic Brucellae.</title>
        <authorList>
            <person name="Chain P.S."/>
            <person name="Comerci D.J."/>
            <person name="Tolmasky M.E."/>
            <person name="Larimer F.W."/>
            <person name="Malfatti S.A."/>
            <person name="Vergez L.M."/>
            <person name="Aguero F."/>
            <person name="Land M.L."/>
            <person name="Ugalde R.A."/>
            <person name="Garcia E."/>
        </authorList>
    </citation>
    <scope>NUCLEOTIDE SEQUENCE [LARGE SCALE GENOMIC DNA]</scope>
    <source>
        <strain>2308</strain>
    </source>
</reference>
<dbReference type="EC" id="1.3.3.3" evidence="1"/>
<dbReference type="EMBL" id="AM040264">
    <property type="protein sequence ID" value="CAJ11522.1"/>
    <property type="molecule type" value="Genomic_DNA"/>
</dbReference>
<dbReference type="RefSeq" id="WP_002964654.1">
    <property type="nucleotide sequence ID" value="NZ_KN046823.1"/>
</dbReference>
<dbReference type="SMR" id="Q2YS10"/>
<dbReference type="STRING" id="359391.BAB1_1566"/>
<dbReference type="GeneID" id="97533266"/>
<dbReference type="KEGG" id="bmf:BAB1_1566"/>
<dbReference type="PATRIC" id="fig|359391.11.peg.1016"/>
<dbReference type="HOGENOM" id="CLU_026169_0_1_5"/>
<dbReference type="PhylomeDB" id="Q2YS10"/>
<dbReference type="UniPathway" id="UPA00251">
    <property type="reaction ID" value="UER00322"/>
</dbReference>
<dbReference type="Proteomes" id="UP000002719">
    <property type="component" value="Chromosome I"/>
</dbReference>
<dbReference type="GO" id="GO:0005737">
    <property type="term" value="C:cytoplasm"/>
    <property type="evidence" value="ECO:0007669"/>
    <property type="project" value="UniProtKB-SubCell"/>
</dbReference>
<dbReference type="GO" id="GO:0004109">
    <property type="term" value="F:coproporphyrinogen oxidase activity"/>
    <property type="evidence" value="ECO:0007669"/>
    <property type="project" value="UniProtKB-UniRule"/>
</dbReference>
<dbReference type="GO" id="GO:0046872">
    <property type="term" value="F:metal ion binding"/>
    <property type="evidence" value="ECO:0007669"/>
    <property type="project" value="UniProtKB-KW"/>
</dbReference>
<dbReference type="GO" id="GO:0042803">
    <property type="term" value="F:protein homodimerization activity"/>
    <property type="evidence" value="ECO:0000250"/>
    <property type="project" value="UniProtKB"/>
</dbReference>
<dbReference type="GO" id="GO:0006782">
    <property type="term" value="P:protoporphyrinogen IX biosynthetic process"/>
    <property type="evidence" value="ECO:0007669"/>
    <property type="project" value="UniProtKB-UniRule"/>
</dbReference>
<dbReference type="FunFam" id="3.40.1500.10:FF:000005">
    <property type="entry name" value="Oxygen-dependent coproporphyrinogen-III oxidase"/>
    <property type="match status" value="1"/>
</dbReference>
<dbReference type="Gene3D" id="3.40.1500.10">
    <property type="entry name" value="Coproporphyrinogen III oxidase, aerobic"/>
    <property type="match status" value="1"/>
</dbReference>
<dbReference type="HAMAP" id="MF_00333">
    <property type="entry name" value="Coprogen_oxidas"/>
    <property type="match status" value="1"/>
</dbReference>
<dbReference type="InterPro" id="IPR001260">
    <property type="entry name" value="Coprogen_oxidase_aer"/>
</dbReference>
<dbReference type="InterPro" id="IPR036406">
    <property type="entry name" value="Coprogen_oxidase_aer_sf"/>
</dbReference>
<dbReference type="InterPro" id="IPR018375">
    <property type="entry name" value="Coprogen_oxidase_CS"/>
</dbReference>
<dbReference type="NCBIfam" id="NF003727">
    <property type="entry name" value="PRK05330.1"/>
    <property type="match status" value="1"/>
</dbReference>
<dbReference type="PANTHER" id="PTHR10755">
    <property type="entry name" value="COPROPORPHYRINOGEN III OXIDASE, MITOCHONDRIAL"/>
    <property type="match status" value="1"/>
</dbReference>
<dbReference type="PANTHER" id="PTHR10755:SF0">
    <property type="entry name" value="OXYGEN-DEPENDENT COPROPORPHYRINOGEN-III OXIDASE, MITOCHONDRIAL"/>
    <property type="match status" value="1"/>
</dbReference>
<dbReference type="Pfam" id="PF01218">
    <property type="entry name" value="Coprogen_oxidas"/>
    <property type="match status" value="1"/>
</dbReference>
<dbReference type="PIRSF" id="PIRSF000166">
    <property type="entry name" value="Coproporphyri_ox"/>
    <property type="match status" value="1"/>
</dbReference>
<dbReference type="PRINTS" id="PR00073">
    <property type="entry name" value="COPRGNOXDASE"/>
</dbReference>
<dbReference type="SUPFAM" id="SSF102886">
    <property type="entry name" value="Coproporphyrinogen III oxidase"/>
    <property type="match status" value="1"/>
</dbReference>
<dbReference type="PROSITE" id="PS01021">
    <property type="entry name" value="COPROGEN_OXIDASE"/>
    <property type="match status" value="1"/>
</dbReference>
<accession>Q2YS10</accession>
<organism>
    <name type="scientific">Brucella abortus (strain 2308)</name>
    <dbReference type="NCBI Taxonomy" id="359391"/>
    <lineage>
        <taxon>Bacteria</taxon>
        <taxon>Pseudomonadati</taxon>
        <taxon>Pseudomonadota</taxon>
        <taxon>Alphaproteobacteria</taxon>
        <taxon>Hyphomicrobiales</taxon>
        <taxon>Brucellaceae</taxon>
        <taxon>Brucella/Ochrobactrum group</taxon>
        <taxon>Brucella</taxon>
    </lineage>
</organism>
<comment type="function">
    <text evidence="1">Involved in the heme biosynthesis. Catalyzes the aerobic oxidative decarboxylation of propionate groups of rings A and B of coproporphyrinogen-III to yield the vinyl groups in protoporphyrinogen-IX.</text>
</comment>
<comment type="catalytic activity">
    <reaction evidence="1">
        <text>coproporphyrinogen III + O2 + 2 H(+) = protoporphyrinogen IX + 2 CO2 + 2 H2O</text>
        <dbReference type="Rhea" id="RHEA:18257"/>
        <dbReference type="ChEBI" id="CHEBI:15377"/>
        <dbReference type="ChEBI" id="CHEBI:15378"/>
        <dbReference type="ChEBI" id="CHEBI:15379"/>
        <dbReference type="ChEBI" id="CHEBI:16526"/>
        <dbReference type="ChEBI" id="CHEBI:57307"/>
        <dbReference type="ChEBI" id="CHEBI:57309"/>
        <dbReference type="EC" id="1.3.3.3"/>
    </reaction>
</comment>
<comment type="cofactor">
    <cofactor evidence="1">
        <name>a divalent metal cation</name>
        <dbReference type="ChEBI" id="CHEBI:60240"/>
    </cofactor>
</comment>
<comment type="pathway">
    <text evidence="1">Porphyrin-containing compound metabolism; protoporphyrin-IX biosynthesis; protoporphyrinogen-IX from coproporphyrinogen-III (O2 route): step 1/1.</text>
</comment>
<comment type="subunit">
    <text evidence="1">Homodimer.</text>
</comment>
<comment type="subcellular location">
    <subcellularLocation>
        <location evidence="1">Cytoplasm</location>
    </subcellularLocation>
</comment>
<comment type="similarity">
    <text evidence="1">Belongs to the aerobic coproporphyrinogen-III oxidase family.</text>
</comment>
<keyword id="KW-0963">Cytoplasm</keyword>
<keyword id="KW-0350">Heme biosynthesis</keyword>
<keyword id="KW-0479">Metal-binding</keyword>
<keyword id="KW-0560">Oxidoreductase</keyword>
<keyword id="KW-0627">Porphyrin biosynthesis</keyword>
<keyword id="KW-1185">Reference proteome</keyword>
<gene>
    <name evidence="1" type="primary">hemF</name>
    <name type="ordered locus">BAB1_1566</name>
</gene>
<protein>
    <recommendedName>
        <fullName evidence="1">Oxygen-dependent coproporphyrinogen-III oxidase</fullName>
        <shortName evidence="1">CPO</shortName>
        <shortName evidence="1">Coprogen oxidase</shortName>
        <shortName evidence="1">Coproporphyrinogenase</shortName>
        <ecNumber evidence="1">1.3.3.3</ecNumber>
    </recommendedName>
</protein>
<sequence>MKREDIPAIIPADIEEKKKAAQSWFEELRDRICASYEQLEDELQGPLSDREPGRFVRTPWQKDDGNGGGVMSIMHGRVFEKVGVHVSTVHGEFSPEFRKQIPGAEEDPRYWASGISLIAHPQNPNVPAVHMNTRMIVTTRQWFAGGADLTPVLDRRRTQEDPDTLAFHKAFRFICEKHKDIVDYQRLKEWCDEYFFLPHRDEPRGIGGIFYDWLHSPEEKGGWDSDFAFTRDVGRGFSVVYPHLVRQNFNKDWTEADRDEQLIRRGRYVEFNLLYDRGTIFGLKTGGNMNAILSSMPPVVKWP</sequence>
<evidence type="ECO:0000255" key="1">
    <source>
        <dbReference type="HAMAP-Rule" id="MF_00333"/>
    </source>
</evidence>
<evidence type="ECO:0000256" key="2">
    <source>
        <dbReference type="SAM" id="MobiDB-lite"/>
    </source>
</evidence>
<name>HEM6_BRUA2</name>
<feature type="chain" id="PRO_1000119787" description="Oxygen-dependent coproporphyrinogen-III oxidase">
    <location>
        <begin position="1"/>
        <end position="303"/>
    </location>
</feature>
<feature type="region of interest" description="Disordered" evidence="2">
    <location>
        <begin position="43"/>
        <end position="62"/>
    </location>
</feature>
<feature type="region of interest" description="Important for dimerization" evidence="1">
    <location>
        <begin position="268"/>
        <end position="303"/>
    </location>
</feature>
<feature type="compositionally biased region" description="Basic and acidic residues" evidence="2">
    <location>
        <begin position="48"/>
        <end position="62"/>
    </location>
</feature>
<feature type="active site" description="Proton donor" evidence="1">
    <location>
        <position position="130"/>
    </location>
</feature>
<feature type="binding site" evidence="1">
    <location>
        <position position="116"/>
    </location>
    <ligand>
        <name>substrate</name>
    </ligand>
</feature>
<feature type="binding site" evidence="1">
    <location>
        <position position="120"/>
    </location>
    <ligand>
        <name>a divalent metal cation</name>
        <dbReference type="ChEBI" id="CHEBI:60240"/>
    </ligand>
</feature>
<feature type="binding site" evidence="1">
    <location>
        <position position="130"/>
    </location>
    <ligand>
        <name>a divalent metal cation</name>
        <dbReference type="ChEBI" id="CHEBI:60240"/>
    </ligand>
</feature>
<feature type="binding site" evidence="1">
    <location>
        <begin position="132"/>
        <end position="134"/>
    </location>
    <ligand>
        <name>substrate</name>
    </ligand>
</feature>
<feature type="binding site" evidence="1">
    <location>
        <position position="168"/>
    </location>
    <ligand>
        <name>a divalent metal cation</name>
        <dbReference type="ChEBI" id="CHEBI:60240"/>
    </ligand>
</feature>
<feature type="binding site" evidence="1">
    <location>
        <position position="199"/>
    </location>
    <ligand>
        <name>a divalent metal cation</name>
        <dbReference type="ChEBI" id="CHEBI:60240"/>
    </ligand>
</feature>
<feature type="binding site" evidence="1">
    <location>
        <begin position="286"/>
        <end position="288"/>
    </location>
    <ligand>
        <name>substrate</name>
    </ligand>
</feature>
<feature type="site" description="Important for dimerization" evidence="1">
    <location>
        <position position="199"/>
    </location>
</feature>